<name>DDL_TROW8</name>
<reference key="1">
    <citation type="journal article" date="2003" name="Lancet">
        <title>Sequencing and analysis of the genome of the Whipple's disease bacterium Tropheryma whipplei.</title>
        <authorList>
            <person name="Bentley S.D."/>
            <person name="Maiwald M."/>
            <person name="Murphy L.D."/>
            <person name="Pallen M.J."/>
            <person name="Yeats C.A."/>
            <person name="Dover L.G."/>
            <person name="Norbertczak H.T."/>
            <person name="Besra G.S."/>
            <person name="Quail M.A."/>
            <person name="Harris D.E."/>
            <person name="von Herbay A."/>
            <person name="Goble A."/>
            <person name="Rutter S."/>
            <person name="Squares R."/>
            <person name="Squares S."/>
            <person name="Barrell B.G."/>
            <person name="Parkhill J."/>
            <person name="Relman D.A."/>
        </authorList>
    </citation>
    <scope>NUCLEOTIDE SEQUENCE [LARGE SCALE GENOMIC DNA]</scope>
    <source>
        <strain>TW08/27</strain>
    </source>
</reference>
<comment type="function">
    <text evidence="2">Cell wall formation.</text>
</comment>
<comment type="catalytic activity">
    <reaction evidence="2">
        <text>2 D-alanine + ATP = D-alanyl-D-alanine + ADP + phosphate + H(+)</text>
        <dbReference type="Rhea" id="RHEA:11224"/>
        <dbReference type="ChEBI" id="CHEBI:15378"/>
        <dbReference type="ChEBI" id="CHEBI:30616"/>
        <dbReference type="ChEBI" id="CHEBI:43474"/>
        <dbReference type="ChEBI" id="CHEBI:57416"/>
        <dbReference type="ChEBI" id="CHEBI:57822"/>
        <dbReference type="ChEBI" id="CHEBI:456216"/>
        <dbReference type="EC" id="6.3.2.4"/>
    </reaction>
</comment>
<comment type="cofactor">
    <cofactor evidence="1">
        <name>Mg(2+)</name>
        <dbReference type="ChEBI" id="CHEBI:18420"/>
    </cofactor>
    <cofactor evidence="1">
        <name>Mn(2+)</name>
        <dbReference type="ChEBI" id="CHEBI:29035"/>
    </cofactor>
    <text evidence="1">Binds 2 magnesium or manganese ions per subunit.</text>
</comment>
<comment type="pathway">
    <text evidence="2">Cell wall biogenesis; peptidoglycan biosynthesis.</text>
</comment>
<comment type="subcellular location">
    <subcellularLocation>
        <location evidence="2">Cytoplasm</location>
    </subcellularLocation>
</comment>
<comment type="similarity">
    <text evidence="2">Belongs to the D-alanine--D-alanine ligase family.</text>
</comment>
<evidence type="ECO:0000250" key="1"/>
<evidence type="ECO:0000255" key="2">
    <source>
        <dbReference type="HAMAP-Rule" id="MF_00047"/>
    </source>
</evidence>
<keyword id="KW-0067">ATP-binding</keyword>
<keyword id="KW-0133">Cell shape</keyword>
<keyword id="KW-0961">Cell wall biogenesis/degradation</keyword>
<keyword id="KW-0963">Cytoplasm</keyword>
<keyword id="KW-0436">Ligase</keyword>
<keyword id="KW-0460">Magnesium</keyword>
<keyword id="KW-0464">Manganese</keyword>
<keyword id="KW-0479">Metal-binding</keyword>
<keyword id="KW-0547">Nucleotide-binding</keyword>
<keyword id="KW-0573">Peptidoglycan synthesis</keyword>
<feature type="chain" id="PRO_0000177899" description="D-alanine--D-alanine ligase">
    <location>
        <begin position="1"/>
        <end position="347"/>
    </location>
</feature>
<feature type="domain" description="ATP-grasp" evidence="2">
    <location>
        <begin position="138"/>
        <end position="339"/>
    </location>
</feature>
<feature type="binding site" evidence="2">
    <location>
        <begin position="171"/>
        <end position="226"/>
    </location>
    <ligand>
        <name>ATP</name>
        <dbReference type="ChEBI" id="CHEBI:30616"/>
    </ligand>
</feature>
<feature type="binding site" evidence="2">
    <location>
        <position position="296"/>
    </location>
    <ligand>
        <name>Mg(2+)</name>
        <dbReference type="ChEBI" id="CHEBI:18420"/>
        <label>1</label>
    </ligand>
</feature>
<feature type="binding site" evidence="2">
    <location>
        <position position="308"/>
    </location>
    <ligand>
        <name>Mg(2+)</name>
        <dbReference type="ChEBI" id="CHEBI:18420"/>
        <label>1</label>
    </ligand>
</feature>
<feature type="binding site" evidence="2">
    <location>
        <position position="308"/>
    </location>
    <ligand>
        <name>Mg(2+)</name>
        <dbReference type="ChEBI" id="CHEBI:18420"/>
        <label>2</label>
    </ligand>
</feature>
<feature type="binding site" evidence="2">
    <location>
        <position position="310"/>
    </location>
    <ligand>
        <name>Mg(2+)</name>
        <dbReference type="ChEBI" id="CHEBI:18420"/>
        <label>2</label>
    </ligand>
</feature>
<protein>
    <recommendedName>
        <fullName evidence="2">D-alanine--D-alanine ligase</fullName>
        <ecNumber evidence="2">6.3.2.4</ecNumber>
    </recommendedName>
    <alternativeName>
        <fullName evidence="2">D-Ala-D-Ala ligase</fullName>
    </alternativeName>
    <alternativeName>
        <fullName evidence="2">D-alanylalanine synthetase</fullName>
    </alternativeName>
</protein>
<sequence length="347" mass="38660">MRSLLLLFGGRSQEHSVSYASARALLEHICDEWTVIPVGITKHGDFVYCSTVSEQDYGEVIDNGNRVVWPSRAGCKKIEVVQARGKSFFVEFDLVFPLLHGVFGEDGTIQGMLDLLDIPYVGSGVFASAAAMDKHYTKILCSHAGIPVLPWYLIKGHAWHKNRDSFLKQISDRFTFPLFVKPVDAGSSFGCTFVDFFEQLPVAIEHALQHGKSAIVEPALDAPEVFCSLIENNGVLQCSELVFVKHSGSKFYDYSAKYLNPVEFVIPAQFDNTDGYAEIASKVFFELGCRHYARIDFFVTESGLVLNEINTSPGLTQKSIFPSSFKSMQYSQVIETILASAYCQVKR</sequence>
<organism>
    <name type="scientific">Tropheryma whipplei (strain TW08/27)</name>
    <name type="common">Whipple's bacillus</name>
    <dbReference type="NCBI Taxonomy" id="218496"/>
    <lineage>
        <taxon>Bacteria</taxon>
        <taxon>Bacillati</taxon>
        <taxon>Actinomycetota</taxon>
        <taxon>Actinomycetes</taxon>
        <taxon>Micrococcales</taxon>
        <taxon>Tropherymataceae</taxon>
        <taxon>Tropheryma</taxon>
    </lineage>
</organism>
<accession>Q83I36</accession>
<proteinExistence type="inferred from homology"/>
<gene>
    <name evidence="2" type="primary">ddl</name>
    <name type="synonym">ddlA</name>
    <name type="ordered locus">TW257</name>
</gene>
<dbReference type="EC" id="6.3.2.4" evidence="2"/>
<dbReference type="EMBL" id="BX251410">
    <property type="protein sequence ID" value="CAD66933.1"/>
    <property type="molecule type" value="Genomic_DNA"/>
</dbReference>
<dbReference type="RefSeq" id="WP_011096214.1">
    <property type="nucleotide sequence ID" value="NC_004551.1"/>
</dbReference>
<dbReference type="SMR" id="Q83I36"/>
<dbReference type="GeneID" id="67388032"/>
<dbReference type="KEGG" id="tws:TW257"/>
<dbReference type="HOGENOM" id="CLU_039268_0_0_11"/>
<dbReference type="UniPathway" id="UPA00219"/>
<dbReference type="GO" id="GO:0005829">
    <property type="term" value="C:cytosol"/>
    <property type="evidence" value="ECO:0007669"/>
    <property type="project" value="TreeGrafter"/>
</dbReference>
<dbReference type="GO" id="GO:0005524">
    <property type="term" value="F:ATP binding"/>
    <property type="evidence" value="ECO:0007669"/>
    <property type="project" value="UniProtKB-KW"/>
</dbReference>
<dbReference type="GO" id="GO:0008716">
    <property type="term" value="F:D-alanine-D-alanine ligase activity"/>
    <property type="evidence" value="ECO:0007669"/>
    <property type="project" value="UniProtKB-UniRule"/>
</dbReference>
<dbReference type="GO" id="GO:0046872">
    <property type="term" value="F:metal ion binding"/>
    <property type="evidence" value="ECO:0007669"/>
    <property type="project" value="UniProtKB-KW"/>
</dbReference>
<dbReference type="GO" id="GO:0071555">
    <property type="term" value="P:cell wall organization"/>
    <property type="evidence" value="ECO:0007669"/>
    <property type="project" value="UniProtKB-KW"/>
</dbReference>
<dbReference type="GO" id="GO:0009252">
    <property type="term" value="P:peptidoglycan biosynthetic process"/>
    <property type="evidence" value="ECO:0007669"/>
    <property type="project" value="UniProtKB-UniRule"/>
</dbReference>
<dbReference type="GO" id="GO:0008360">
    <property type="term" value="P:regulation of cell shape"/>
    <property type="evidence" value="ECO:0007669"/>
    <property type="project" value="UniProtKB-KW"/>
</dbReference>
<dbReference type="Gene3D" id="3.40.50.20">
    <property type="match status" value="1"/>
</dbReference>
<dbReference type="Gene3D" id="3.30.1490.20">
    <property type="entry name" value="ATP-grasp fold, A domain"/>
    <property type="match status" value="1"/>
</dbReference>
<dbReference type="Gene3D" id="3.30.470.20">
    <property type="entry name" value="ATP-grasp fold, B domain"/>
    <property type="match status" value="1"/>
</dbReference>
<dbReference type="HAMAP" id="MF_00047">
    <property type="entry name" value="Dala_Dala_lig"/>
    <property type="match status" value="1"/>
</dbReference>
<dbReference type="InterPro" id="IPR011761">
    <property type="entry name" value="ATP-grasp"/>
</dbReference>
<dbReference type="InterPro" id="IPR013815">
    <property type="entry name" value="ATP_grasp_subdomain_1"/>
</dbReference>
<dbReference type="InterPro" id="IPR000291">
    <property type="entry name" value="D-Ala_lig_Van_CS"/>
</dbReference>
<dbReference type="InterPro" id="IPR005905">
    <property type="entry name" value="D_ala_D_ala"/>
</dbReference>
<dbReference type="InterPro" id="IPR011095">
    <property type="entry name" value="Dala_Dala_lig_C"/>
</dbReference>
<dbReference type="InterPro" id="IPR011127">
    <property type="entry name" value="Dala_Dala_lig_N"/>
</dbReference>
<dbReference type="InterPro" id="IPR016185">
    <property type="entry name" value="PreATP-grasp_dom_sf"/>
</dbReference>
<dbReference type="NCBIfam" id="TIGR01205">
    <property type="entry name" value="D_ala_D_alaTIGR"/>
    <property type="match status" value="1"/>
</dbReference>
<dbReference type="NCBIfam" id="NF002528">
    <property type="entry name" value="PRK01966.1-4"/>
    <property type="match status" value="1"/>
</dbReference>
<dbReference type="PANTHER" id="PTHR23132">
    <property type="entry name" value="D-ALANINE--D-ALANINE LIGASE"/>
    <property type="match status" value="1"/>
</dbReference>
<dbReference type="PANTHER" id="PTHR23132:SF25">
    <property type="entry name" value="D-ALANINE--D-ALANINE LIGASE A"/>
    <property type="match status" value="1"/>
</dbReference>
<dbReference type="Pfam" id="PF07478">
    <property type="entry name" value="Dala_Dala_lig_C"/>
    <property type="match status" value="1"/>
</dbReference>
<dbReference type="Pfam" id="PF01820">
    <property type="entry name" value="Dala_Dala_lig_N"/>
    <property type="match status" value="1"/>
</dbReference>
<dbReference type="PIRSF" id="PIRSF039102">
    <property type="entry name" value="Ddl/VanB"/>
    <property type="match status" value="1"/>
</dbReference>
<dbReference type="SUPFAM" id="SSF56059">
    <property type="entry name" value="Glutathione synthetase ATP-binding domain-like"/>
    <property type="match status" value="1"/>
</dbReference>
<dbReference type="SUPFAM" id="SSF52440">
    <property type="entry name" value="PreATP-grasp domain"/>
    <property type="match status" value="1"/>
</dbReference>
<dbReference type="PROSITE" id="PS50975">
    <property type="entry name" value="ATP_GRASP"/>
    <property type="match status" value="1"/>
</dbReference>
<dbReference type="PROSITE" id="PS00843">
    <property type="entry name" value="DALA_DALA_LIGASE_1"/>
    <property type="match status" value="1"/>
</dbReference>
<dbReference type="PROSITE" id="PS00844">
    <property type="entry name" value="DALA_DALA_LIGASE_2"/>
    <property type="match status" value="1"/>
</dbReference>